<organism>
    <name type="scientific">Drosophila yakuba</name>
    <name type="common">Fruit fly</name>
    <dbReference type="NCBI Taxonomy" id="7245"/>
    <lineage>
        <taxon>Eukaryota</taxon>
        <taxon>Metazoa</taxon>
        <taxon>Ecdysozoa</taxon>
        <taxon>Arthropoda</taxon>
        <taxon>Hexapoda</taxon>
        <taxon>Insecta</taxon>
        <taxon>Pterygota</taxon>
        <taxon>Neoptera</taxon>
        <taxon>Endopterygota</taxon>
        <taxon>Diptera</taxon>
        <taxon>Brachycera</taxon>
        <taxon>Muscomorpha</taxon>
        <taxon>Ephydroidea</taxon>
        <taxon>Drosophilidae</taxon>
        <taxon>Drosophila</taxon>
        <taxon>Sophophora</taxon>
    </lineage>
</organism>
<comment type="function">
    <text evidence="1 2">Activates phosphatidylinositol 3-kinase when bound to the regulatory p85 subunit. May mediate the control of various cellular processes by insulin-like peptides. When phosphorylated by the insulin receptor binds specifically to various cellular proteins containing SH2 domains. Involved in control of cell proliferation, cell size, and body and organ growth throughout development. Also has a role in a signaling pathway controlling the physiological response required to endure periods of low nutrient conditions. Insulin/insulin-like growth factor (IGF) signaling pathway has a role in regulating aging and is necessary in the ovary for vitellogenic maturation (By similarity).</text>
</comment>
<comment type="subunit">
    <text evidence="2">Bindings to phosphatidylinositol 3-kinase and SHP2.</text>
</comment>
<name>IRS1_DROYA</name>
<sequence length="949" mass="106273">MASISDDGMALSGYLKKLKTMKKKFFVLYEETSHSAARLEYYDSEKKFLQRAEPKRVIYLKNCFNINRRLDTKHRFVIVLSSRDGGFGIVLENENDLRKWLDKLLVLQRNIANSNGTAHSPYDQVWQVVIQKKGISEKVGITGTYHCCLTSKSLTFVCIGPEKTPNGEDRVASIEILLTTIRRCGHASPQCIFYVELGRQSVLGSGDLWMETDNAAVATNMHNTILSAMSAKTESNTNLINVYQNRPDLSHEPMRKRSSSANEASKPINVNVIQNSQNSLEFRSCSSPHNYGFGRERCDSLPTRNGTLSESSNQTYFGSNHGLRSNTISGNRPHSTNKHSNSPTFTMPLRCSESEESSISVEESDDNGSYSHYRLNTRTSETAIPEENIDDFASAEFSKVTEPNESDENYIPMTPINPTDAIHEKEKIDMQRLEDASLHFDFPEHASEKLAKDYDLDSDNQCVRPIRAYSIGNKVEHLKFNKRLGHLNDTGQNPNRVRAYSVGSKSKIPRCDLQRVVLVEDNKHEFVANRSQSSITKEGSGYGTSGNRQKKSTSAPLLSLKNQINSDRMSDLMEIDFSQASNLEKQKFIKNNEIPKYIENVFPKTPRTDSSSLTLHATSQKDIFNGTKLNNTANTSEDGYLEMKPVGNAYTPSSNCLPIKVEKLKLSDYTAPLTTAAPVHDLNKISTYNISAEKWREQTTSEEKKSNSPLNEKPFSLKPTNVENISHDVHSTNNIDCEQVSVQSDKQNNLDDKIVENNNLDIGGHEEKKLVHSISSEDYTQIKDKSNDFTKFNEAGYKILQIKSDSSLISSKLYQKGIHKDNLERSHRLTESVNTIPDNATASSSVTKFNINAKAADSRSTDPSTPQNILQIKDLNFPSRSSSRISQPELHYASLDLPHCSGQNPAKYLKRGSRESPPVSACPEDGNTYAKIDFDQSDSSSSSSNIFNT</sequence>
<protein>
    <recommendedName>
        <fullName evidence="2">Insulin receptor substrate 1</fullName>
    </recommendedName>
    <alternativeName>
        <fullName evidence="2">Protein chico</fullName>
    </alternativeName>
</protein>
<accession>B4NZ70</accession>
<evidence type="ECO:0000250" key="1">
    <source>
        <dbReference type="UniProtKB" id="P35570"/>
    </source>
</evidence>
<evidence type="ECO:0000250" key="2">
    <source>
        <dbReference type="UniProtKB" id="Q9XTN2"/>
    </source>
</evidence>
<evidence type="ECO:0000255" key="3"/>
<evidence type="ECO:0000255" key="4">
    <source>
        <dbReference type="PROSITE-ProRule" id="PRU00145"/>
    </source>
</evidence>
<evidence type="ECO:0000255" key="5">
    <source>
        <dbReference type="PROSITE-ProRule" id="PRU00389"/>
    </source>
</evidence>
<evidence type="ECO:0000256" key="6">
    <source>
        <dbReference type="SAM" id="MobiDB-lite"/>
    </source>
</evidence>
<evidence type="ECO:0000312" key="7">
    <source>
        <dbReference type="EMBL" id="EDW88765.1"/>
    </source>
</evidence>
<gene>
    <name evidence="2" type="primary">chico</name>
    <name type="ORF">GE26285</name>
</gene>
<reference evidence="7" key="1">
    <citation type="journal article" date="2007" name="Nature">
        <title>Evolution of genes and genomes on the Drosophila phylogeny.</title>
        <authorList>
            <consortium name="Drosophila 12 genomes consortium"/>
        </authorList>
    </citation>
    <scope>NUCLEOTIDE SEQUENCE [LARGE SCALE GENOMIC DNA]</scope>
    <source>
        <strain evidence="7">Tai18E2 / Tucson 14021-0261.01</strain>
    </source>
</reference>
<dbReference type="EMBL" id="CM000157">
    <property type="protein sequence ID" value="EDW88765.1"/>
    <property type="molecule type" value="Genomic_DNA"/>
</dbReference>
<dbReference type="RefSeq" id="XP_015054493.1">
    <property type="nucleotide sequence ID" value="XM_015199007.1"/>
</dbReference>
<dbReference type="SMR" id="B4NZ70"/>
<dbReference type="EnsemblMetazoa" id="FBtr0401223">
    <property type="protein sequence ID" value="FBpp0360148"/>
    <property type="gene ID" value="FBgn0243316"/>
</dbReference>
<dbReference type="EnsemblMetazoa" id="FBtr0402210">
    <property type="protein sequence ID" value="FBpp0361071"/>
    <property type="gene ID" value="FBgn0243316"/>
</dbReference>
<dbReference type="EnsemblMetazoa" id="XM_015199008.2">
    <property type="protein sequence ID" value="XP_015054494.1"/>
    <property type="gene ID" value="LOC6527986"/>
</dbReference>
<dbReference type="GeneID" id="6527986"/>
<dbReference type="CTD" id="30067"/>
<dbReference type="eggNOG" id="ENOG502QUNU">
    <property type="taxonomic scope" value="Eukaryota"/>
</dbReference>
<dbReference type="HOGENOM" id="CLU_012544_0_0_1"/>
<dbReference type="OMA" id="RNCSSPH"/>
<dbReference type="OrthoDB" id="946068at2759"/>
<dbReference type="PhylomeDB" id="B4NZ70"/>
<dbReference type="ChiTaRS" id="chico">
    <property type="organism name" value="fly"/>
</dbReference>
<dbReference type="Proteomes" id="UP000002282">
    <property type="component" value="Chromosome 2L"/>
</dbReference>
<dbReference type="GO" id="GO:0005737">
    <property type="term" value="C:cytoplasm"/>
    <property type="evidence" value="ECO:0000250"/>
    <property type="project" value="UniProtKB"/>
</dbReference>
<dbReference type="GO" id="GO:0005829">
    <property type="term" value="C:cytosol"/>
    <property type="evidence" value="ECO:0007669"/>
    <property type="project" value="TreeGrafter"/>
</dbReference>
<dbReference type="GO" id="GO:0043231">
    <property type="term" value="C:intracellular membrane-bounded organelle"/>
    <property type="evidence" value="ECO:0000250"/>
    <property type="project" value="UniProtKB"/>
</dbReference>
<dbReference type="GO" id="GO:0005634">
    <property type="term" value="C:nucleus"/>
    <property type="evidence" value="ECO:0000250"/>
    <property type="project" value="UniProtKB"/>
</dbReference>
<dbReference type="GO" id="GO:0005886">
    <property type="term" value="C:plasma membrane"/>
    <property type="evidence" value="ECO:0007669"/>
    <property type="project" value="TreeGrafter"/>
</dbReference>
<dbReference type="GO" id="GO:0005158">
    <property type="term" value="F:insulin receptor binding"/>
    <property type="evidence" value="ECO:0000250"/>
    <property type="project" value="UniProtKB"/>
</dbReference>
<dbReference type="GO" id="GO:0005159">
    <property type="term" value="F:insulin-like growth factor receptor binding"/>
    <property type="evidence" value="ECO:0000250"/>
    <property type="project" value="UniProtKB"/>
</dbReference>
<dbReference type="GO" id="GO:0043548">
    <property type="term" value="F:phosphatidylinositol 3-kinase binding"/>
    <property type="evidence" value="ECO:0007669"/>
    <property type="project" value="TreeGrafter"/>
</dbReference>
<dbReference type="GO" id="GO:0008286">
    <property type="term" value="P:insulin receptor signaling pathway"/>
    <property type="evidence" value="ECO:0000250"/>
    <property type="project" value="UniProtKB"/>
</dbReference>
<dbReference type="GO" id="GO:0048009">
    <property type="term" value="P:insulin-like growth factor receptor signaling pathway"/>
    <property type="evidence" value="ECO:0000250"/>
    <property type="project" value="UniProtKB"/>
</dbReference>
<dbReference type="GO" id="GO:0048477">
    <property type="term" value="P:oogenesis"/>
    <property type="evidence" value="ECO:0007669"/>
    <property type="project" value="UniProtKB-KW"/>
</dbReference>
<dbReference type="GO" id="GO:0007296">
    <property type="term" value="P:vitellogenesis"/>
    <property type="evidence" value="ECO:0000250"/>
    <property type="project" value="UniProtKB"/>
</dbReference>
<dbReference type="CDD" id="cd01257">
    <property type="entry name" value="PH_IRS"/>
    <property type="match status" value="1"/>
</dbReference>
<dbReference type="CDD" id="cd01204">
    <property type="entry name" value="PTB_IRS"/>
    <property type="match status" value="1"/>
</dbReference>
<dbReference type="FunFam" id="2.30.29.30:FF:000441">
    <property type="entry name" value="Insulin receptor substrate 1"/>
    <property type="match status" value="1"/>
</dbReference>
<dbReference type="FunFam" id="2.30.29.30:FF:000457">
    <property type="entry name" value="Insulin receptor substrate 1"/>
    <property type="match status" value="1"/>
</dbReference>
<dbReference type="Gene3D" id="2.30.29.30">
    <property type="entry name" value="Pleckstrin-homology domain (PH domain)/Phosphotyrosine-binding domain (PTB)"/>
    <property type="match status" value="2"/>
</dbReference>
<dbReference type="InterPro" id="IPR039011">
    <property type="entry name" value="IRS"/>
</dbReference>
<dbReference type="InterPro" id="IPR002404">
    <property type="entry name" value="IRS_PTB"/>
</dbReference>
<dbReference type="InterPro" id="IPR011993">
    <property type="entry name" value="PH-like_dom_sf"/>
</dbReference>
<dbReference type="InterPro" id="IPR001849">
    <property type="entry name" value="PH_domain"/>
</dbReference>
<dbReference type="PANTHER" id="PTHR10614">
    <property type="entry name" value="INSULIN RECEPTOR SUBSTRATE"/>
    <property type="match status" value="1"/>
</dbReference>
<dbReference type="PANTHER" id="PTHR10614:SF13">
    <property type="entry name" value="INSULIN RECEPTOR SUBSTRATE 1"/>
    <property type="match status" value="1"/>
</dbReference>
<dbReference type="Pfam" id="PF02174">
    <property type="entry name" value="IRS"/>
    <property type="match status" value="1"/>
</dbReference>
<dbReference type="PRINTS" id="PR00628">
    <property type="entry name" value="INSULINRSI"/>
</dbReference>
<dbReference type="SMART" id="SM01244">
    <property type="entry name" value="IRS"/>
    <property type="match status" value="1"/>
</dbReference>
<dbReference type="SMART" id="SM00233">
    <property type="entry name" value="PH"/>
    <property type="match status" value="1"/>
</dbReference>
<dbReference type="SMART" id="SM00310">
    <property type="entry name" value="PTBI"/>
    <property type="match status" value="1"/>
</dbReference>
<dbReference type="SUPFAM" id="SSF50729">
    <property type="entry name" value="PH domain-like"/>
    <property type="match status" value="2"/>
</dbReference>
<dbReference type="PROSITE" id="PS51064">
    <property type="entry name" value="IRS_PTB"/>
    <property type="match status" value="1"/>
</dbReference>
<dbReference type="PROSITE" id="PS50003">
    <property type="entry name" value="PH_DOMAIN"/>
    <property type="match status" value="1"/>
</dbReference>
<proteinExistence type="inferred from homology"/>
<feature type="chain" id="PRO_0000395322" description="Insulin receptor substrate 1">
    <location>
        <begin position="1"/>
        <end position="949"/>
    </location>
</feature>
<feature type="domain" description="PH" evidence="4">
    <location>
        <begin position="8"/>
        <end position="109"/>
    </location>
</feature>
<feature type="domain" description="IRS-type PTB" evidence="5">
    <location>
        <begin position="122"/>
        <end position="236"/>
    </location>
</feature>
<feature type="region of interest" description="Disordered" evidence="6">
    <location>
        <begin position="247"/>
        <end position="270"/>
    </location>
</feature>
<feature type="region of interest" description="Disordered" evidence="6">
    <location>
        <begin position="304"/>
        <end position="373"/>
    </location>
</feature>
<feature type="region of interest" description="Disordered" evidence="6">
    <location>
        <begin position="530"/>
        <end position="556"/>
    </location>
</feature>
<feature type="region of interest" description="Disordered" evidence="6">
    <location>
        <begin position="696"/>
        <end position="718"/>
    </location>
</feature>
<feature type="region of interest" description="Disordered" evidence="6">
    <location>
        <begin position="906"/>
        <end position="949"/>
    </location>
</feature>
<feature type="short sequence motif" description="YXXM motif 1" evidence="3">
    <location>
        <begin position="410"/>
        <end position="413"/>
    </location>
</feature>
<feature type="short sequence motif" description="YXXM motif 2" evidence="3">
    <location>
        <begin position="640"/>
        <end position="643"/>
    </location>
</feature>
<feature type="compositionally biased region" description="Polar residues" evidence="6">
    <location>
        <begin position="304"/>
        <end position="345"/>
    </location>
</feature>
<feature type="compositionally biased region" description="Basic and acidic residues" evidence="6">
    <location>
        <begin position="696"/>
        <end position="706"/>
    </location>
</feature>
<feature type="compositionally biased region" description="Low complexity" evidence="6">
    <location>
        <begin position="937"/>
        <end position="949"/>
    </location>
</feature>
<feature type="modified residue" description="Phosphoserine" evidence="2">
    <location>
        <position position="286"/>
    </location>
</feature>
<feature type="modified residue" description="Phosphoserine" evidence="2">
    <location>
        <position position="287"/>
    </location>
</feature>
<feature type="modified residue" description="Phosphoserine" evidence="2">
    <location>
        <position position="342"/>
    </location>
</feature>
<feature type="modified residue" description="Phosphotyrosine; by INSR" evidence="1">
    <location>
        <position position="410"/>
    </location>
</feature>
<feature type="modified residue" description="Phosphoserine" evidence="2">
    <location>
        <position position="554"/>
    </location>
</feature>
<feature type="modified residue" description="Phosphotyrosine; by INSR" evidence="1">
    <location>
        <position position="892"/>
    </location>
</feature>
<feature type="modified residue" description="Phosphoserine" evidence="2">
    <location>
        <position position="913"/>
    </location>
</feature>
<feature type="modified residue" description="Phosphoserine" evidence="2">
    <location>
        <position position="916"/>
    </location>
</feature>
<feature type="modified residue" description="Phosphotyrosine; by INSR" evidence="1">
    <location>
        <position position="929"/>
    </location>
</feature>
<keyword id="KW-0221">Differentiation</keyword>
<keyword id="KW-0341">Growth regulation</keyword>
<keyword id="KW-0896">Oogenesis</keyword>
<keyword id="KW-0597">Phosphoprotein</keyword>
<keyword id="KW-0677">Repeat</keyword>